<keyword id="KW-0378">Hydrolase</keyword>
<keyword id="KW-0460">Magnesium</keyword>
<keyword id="KW-0479">Metal-binding</keyword>
<keyword id="KW-0546">Nucleotide metabolism</keyword>
<protein>
    <recommendedName>
        <fullName evidence="1">Deoxyuridine 5'-triphosphate nucleotidohydrolase</fullName>
        <shortName evidence="1">dUTPase</shortName>
        <ecNumber evidence="1">3.6.1.23</ecNumber>
    </recommendedName>
    <alternativeName>
        <fullName evidence="1">dUTP pyrophosphatase</fullName>
    </alternativeName>
</protein>
<feature type="chain" id="PRO_0000182893" description="Deoxyuridine 5'-triphosphate nucleotidohydrolase">
    <location>
        <begin position="1"/>
        <end position="139"/>
    </location>
</feature>
<feature type="binding site" evidence="1">
    <location>
        <begin position="58"/>
        <end position="60"/>
    </location>
    <ligand>
        <name>substrate</name>
    </ligand>
</feature>
<feature type="binding site" evidence="1">
    <location>
        <position position="71"/>
    </location>
    <ligand>
        <name>substrate</name>
    </ligand>
</feature>
<feature type="binding site" evidence="1">
    <location>
        <begin position="75"/>
        <end position="77"/>
    </location>
    <ligand>
        <name>substrate</name>
    </ligand>
</feature>
<feature type="binding site" evidence="1">
    <location>
        <position position="85"/>
    </location>
    <ligand>
        <name>substrate</name>
    </ligand>
</feature>
<sequence>MGSKIPLPQYETKGSAGLDLRACLDSNLSLQAGTSQLIPIGFAMYLEDPGLAAMVIPRSGLGSKHGIVLGNLVGLIDSDYQGELMVPAWNRSDTDFEINPGDRIAQMIIVPVIQADFEIVDEFNETQRGEKGFGSSGIN</sequence>
<name>DUT_PRB01</name>
<accession>Q9F7S4</accession>
<dbReference type="EC" id="3.6.1.23" evidence="1"/>
<dbReference type="EMBL" id="AF279106">
    <property type="protein sequence ID" value="AAG10445.1"/>
    <property type="molecule type" value="Genomic_DNA"/>
</dbReference>
<dbReference type="SMR" id="Q9F7S4"/>
<dbReference type="UniPathway" id="UPA00610">
    <property type="reaction ID" value="UER00666"/>
</dbReference>
<dbReference type="GO" id="GO:0004170">
    <property type="term" value="F:dUTP diphosphatase activity"/>
    <property type="evidence" value="ECO:0007669"/>
    <property type="project" value="UniProtKB-UniRule"/>
</dbReference>
<dbReference type="GO" id="GO:0000287">
    <property type="term" value="F:magnesium ion binding"/>
    <property type="evidence" value="ECO:0007669"/>
    <property type="project" value="UniProtKB-UniRule"/>
</dbReference>
<dbReference type="GO" id="GO:0006226">
    <property type="term" value="P:dUMP biosynthetic process"/>
    <property type="evidence" value="ECO:0007669"/>
    <property type="project" value="UniProtKB-UniRule"/>
</dbReference>
<dbReference type="GO" id="GO:0046081">
    <property type="term" value="P:dUTP catabolic process"/>
    <property type="evidence" value="ECO:0007669"/>
    <property type="project" value="InterPro"/>
</dbReference>
<dbReference type="CDD" id="cd07557">
    <property type="entry name" value="trimeric_dUTPase"/>
    <property type="match status" value="1"/>
</dbReference>
<dbReference type="FunFam" id="2.70.40.10:FF:000002">
    <property type="entry name" value="dUTP diphosphatase"/>
    <property type="match status" value="1"/>
</dbReference>
<dbReference type="Gene3D" id="2.70.40.10">
    <property type="match status" value="1"/>
</dbReference>
<dbReference type="HAMAP" id="MF_00116">
    <property type="entry name" value="dUTPase_bact"/>
    <property type="match status" value="1"/>
</dbReference>
<dbReference type="InterPro" id="IPR008181">
    <property type="entry name" value="dUTPase"/>
</dbReference>
<dbReference type="InterPro" id="IPR029054">
    <property type="entry name" value="dUTPase-like"/>
</dbReference>
<dbReference type="InterPro" id="IPR036157">
    <property type="entry name" value="dUTPase-like_sf"/>
</dbReference>
<dbReference type="InterPro" id="IPR033704">
    <property type="entry name" value="dUTPase_trimeric"/>
</dbReference>
<dbReference type="NCBIfam" id="TIGR00576">
    <property type="entry name" value="dut"/>
    <property type="match status" value="1"/>
</dbReference>
<dbReference type="NCBIfam" id="NF001862">
    <property type="entry name" value="PRK00601.1"/>
    <property type="match status" value="1"/>
</dbReference>
<dbReference type="PANTHER" id="PTHR11241">
    <property type="entry name" value="DEOXYURIDINE 5'-TRIPHOSPHATE NUCLEOTIDOHYDROLASE"/>
    <property type="match status" value="1"/>
</dbReference>
<dbReference type="PANTHER" id="PTHR11241:SF0">
    <property type="entry name" value="DEOXYURIDINE 5'-TRIPHOSPHATE NUCLEOTIDOHYDROLASE"/>
    <property type="match status" value="1"/>
</dbReference>
<dbReference type="Pfam" id="PF00692">
    <property type="entry name" value="dUTPase"/>
    <property type="match status" value="1"/>
</dbReference>
<dbReference type="SUPFAM" id="SSF51283">
    <property type="entry name" value="dUTPase-like"/>
    <property type="match status" value="1"/>
</dbReference>
<organism>
    <name type="scientific">Gamma-proteobacterium EBAC31A08</name>
    <dbReference type="NCBI Taxonomy" id="133804"/>
    <lineage>
        <taxon>Bacteria</taxon>
        <taxon>Pseudomonadati</taxon>
        <taxon>Pseudomonadota</taxon>
        <taxon>Gammaproteobacteria</taxon>
        <taxon>environmental samples</taxon>
    </lineage>
</organism>
<reference key="1">
    <citation type="journal article" date="2000" name="Science">
        <title>Bacterial rhodopsin: evidence for a new type of phototrophy in the sea.</title>
        <authorList>
            <person name="Beja O."/>
            <person name="Aravind L."/>
            <person name="Koonin E.V."/>
            <person name="Suzuki M.T."/>
            <person name="Hadd A."/>
            <person name="Nguyen L.P."/>
            <person name="Jovanovich S.B."/>
            <person name="Gates C.M."/>
            <person name="Feldman R.A."/>
            <person name="Spudich J.L."/>
            <person name="Spudich E.N."/>
            <person name="DeLong E.F."/>
        </authorList>
    </citation>
    <scope>NUCLEOTIDE SEQUENCE [GENOMIC DNA]</scope>
</reference>
<proteinExistence type="inferred from homology"/>
<evidence type="ECO:0000255" key="1">
    <source>
        <dbReference type="HAMAP-Rule" id="MF_00116"/>
    </source>
</evidence>
<gene>
    <name evidence="1" type="primary">dut</name>
</gene>
<comment type="function">
    <text evidence="1">This enzyme is involved in nucleotide metabolism: it produces dUMP, the immediate precursor of thymidine nucleotides and it decreases the intracellular concentration of dUTP so that uracil cannot be incorporated into DNA.</text>
</comment>
<comment type="catalytic activity">
    <reaction evidence="1">
        <text>dUTP + H2O = dUMP + diphosphate + H(+)</text>
        <dbReference type="Rhea" id="RHEA:10248"/>
        <dbReference type="ChEBI" id="CHEBI:15377"/>
        <dbReference type="ChEBI" id="CHEBI:15378"/>
        <dbReference type="ChEBI" id="CHEBI:33019"/>
        <dbReference type="ChEBI" id="CHEBI:61555"/>
        <dbReference type="ChEBI" id="CHEBI:246422"/>
        <dbReference type="EC" id="3.6.1.23"/>
    </reaction>
</comment>
<comment type="cofactor">
    <cofactor evidence="1">
        <name>Mg(2+)</name>
        <dbReference type="ChEBI" id="CHEBI:18420"/>
    </cofactor>
</comment>
<comment type="pathway">
    <text evidence="1">Pyrimidine metabolism; dUMP biosynthesis; dUMP from dCTP (dUTP route): step 2/2.</text>
</comment>
<comment type="similarity">
    <text evidence="1">Belongs to the dUTPase family.</text>
</comment>